<gene>
    <name type="primary">ctaD2</name>
    <name type="ordered locus">SCO7234</name>
    <name type="ORF">SC2H12.33</name>
</gene>
<accession>Q9K451</accession>
<keyword id="KW-1003">Cell membrane</keyword>
<keyword id="KW-0186">Copper</keyword>
<keyword id="KW-0249">Electron transport</keyword>
<keyword id="KW-0349">Heme</keyword>
<keyword id="KW-0408">Iron</keyword>
<keyword id="KW-0472">Membrane</keyword>
<keyword id="KW-0479">Metal-binding</keyword>
<keyword id="KW-1185">Reference proteome</keyword>
<keyword id="KW-0679">Respiratory chain</keyword>
<keyword id="KW-1278">Translocase</keyword>
<keyword id="KW-0812">Transmembrane</keyword>
<keyword id="KW-1133">Transmembrane helix</keyword>
<keyword id="KW-0813">Transport</keyword>
<name>COX1B_STRCO</name>
<protein>
    <recommendedName>
        <fullName>Putative cytochrome c oxidase subunit 1-beta</fullName>
        <ecNumber>7.1.1.9</ecNumber>
    </recommendedName>
    <alternativeName>
        <fullName>Cytochrome aa3 subunit 1-beta</fullName>
    </alternativeName>
    <alternativeName>
        <fullName>Cytochrome c oxidase polypeptide I-beta</fullName>
    </alternativeName>
</protein>
<sequence length="573" mass="64041">MVVGLSPRRLGTLRRMAVDRRTKSPRRTPARQRTNRTLGRALVRWATTTDHKVIGHLYLATSFGFFLLGGVLAMLMRSELARPGLQLFSNEQYNQLFTVHGTIMMLLFATPLFAGFTNVIMPLQIGAPDLAFPRLNALSYWMYLFGGLMVVSGFLTPGGAASFGWFAYAPLNSATFSPGPGGDLWTMGLVVSGVSTTLSAVNFISTIICLRAPGMTMFRMPIFTWNILFTSILVLPAFPVLTAALLMLEADRKFGAHVFDAANGGALLWQHLFWFFGHPEVYIVALPFFGIVTEIIPVFSRKPIFGYVSLVGATIAITFLSAVVWAHHMFATGAVLLPFFSLMSFLIAVPTGVKFFNWIGTMIRGSLSFETPMLWACGFLVTFLLGGMSGVLIASPPLDFHLTDSYFIVAHLHYVLFGTVVFAMFAGFYFWWPKFTGKLLDERLGKIHFWTLFVGFQTTFLVQHWLGEQGMPRRYADYLAADGFTTLNTISSIGAFLLGLSTLPFLYNVWRTHQYGEKVGRDDPWGYGRSLEWATSSPPPRHNFTSLPRIRSESPAFDLHHPDVTRHDQRHVQ</sequence>
<evidence type="ECO:0000250" key="1"/>
<evidence type="ECO:0000255" key="2"/>
<evidence type="ECO:0000305" key="3"/>
<proteinExistence type="inferred from homology"/>
<dbReference type="EC" id="7.1.1.9"/>
<dbReference type="EMBL" id="AL939130">
    <property type="protein sequence ID" value="CAB94657.1"/>
    <property type="molecule type" value="Genomic_DNA"/>
</dbReference>
<dbReference type="RefSeq" id="NP_631290.1">
    <property type="nucleotide sequence ID" value="NC_003888.3"/>
</dbReference>
<dbReference type="SMR" id="Q9K451"/>
<dbReference type="FunCoup" id="Q9K451">
    <property type="interactions" value="73"/>
</dbReference>
<dbReference type="STRING" id="100226.gene:17764894"/>
<dbReference type="PaxDb" id="100226-SCO7234"/>
<dbReference type="KEGG" id="sco:SCO7234"/>
<dbReference type="PATRIC" id="fig|100226.15.peg.7334"/>
<dbReference type="eggNOG" id="COG0843">
    <property type="taxonomic scope" value="Bacteria"/>
</dbReference>
<dbReference type="HOGENOM" id="CLU_011899_7_1_11"/>
<dbReference type="InParanoid" id="Q9K451"/>
<dbReference type="OrthoDB" id="9803294at2"/>
<dbReference type="PhylomeDB" id="Q9K451"/>
<dbReference type="UniPathway" id="UPA00705"/>
<dbReference type="Proteomes" id="UP000001973">
    <property type="component" value="Chromosome"/>
</dbReference>
<dbReference type="GO" id="GO:0005886">
    <property type="term" value="C:plasma membrane"/>
    <property type="evidence" value="ECO:0007669"/>
    <property type="project" value="UniProtKB-SubCell"/>
</dbReference>
<dbReference type="GO" id="GO:0004129">
    <property type="term" value="F:cytochrome-c oxidase activity"/>
    <property type="evidence" value="ECO:0007669"/>
    <property type="project" value="UniProtKB-EC"/>
</dbReference>
<dbReference type="GO" id="GO:0020037">
    <property type="term" value="F:heme binding"/>
    <property type="evidence" value="ECO:0007669"/>
    <property type="project" value="InterPro"/>
</dbReference>
<dbReference type="GO" id="GO:0046872">
    <property type="term" value="F:metal ion binding"/>
    <property type="evidence" value="ECO:0007669"/>
    <property type="project" value="UniProtKB-KW"/>
</dbReference>
<dbReference type="GO" id="GO:0009060">
    <property type="term" value="P:aerobic respiration"/>
    <property type="evidence" value="ECO:0000318"/>
    <property type="project" value="GO_Central"/>
</dbReference>
<dbReference type="GO" id="GO:0015990">
    <property type="term" value="P:electron transport coupled proton transport"/>
    <property type="evidence" value="ECO:0007669"/>
    <property type="project" value="InterPro"/>
</dbReference>
<dbReference type="GO" id="GO:0006119">
    <property type="term" value="P:oxidative phosphorylation"/>
    <property type="evidence" value="ECO:0007669"/>
    <property type="project" value="UniProtKB-UniPathway"/>
</dbReference>
<dbReference type="GO" id="GO:0022904">
    <property type="term" value="P:respiratory electron transport chain"/>
    <property type="evidence" value="ECO:0000318"/>
    <property type="project" value="GO_Central"/>
</dbReference>
<dbReference type="CDD" id="cd01662">
    <property type="entry name" value="Ubiquinol_Oxidase_I"/>
    <property type="match status" value="1"/>
</dbReference>
<dbReference type="FunFam" id="1.20.210.10:FF:000003">
    <property type="entry name" value="Cytochrome c oxidase subunit 1"/>
    <property type="match status" value="1"/>
</dbReference>
<dbReference type="Gene3D" id="1.20.210.10">
    <property type="entry name" value="Cytochrome c oxidase-like, subunit I domain"/>
    <property type="match status" value="1"/>
</dbReference>
<dbReference type="InterPro" id="IPR023616">
    <property type="entry name" value="Cyt_c_oxase-like_su1_dom"/>
</dbReference>
<dbReference type="InterPro" id="IPR036927">
    <property type="entry name" value="Cyt_c_oxase-like_su1_sf"/>
</dbReference>
<dbReference type="InterPro" id="IPR000883">
    <property type="entry name" value="Cyt_C_Oxase_1"/>
</dbReference>
<dbReference type="InterPro" id="IPR023615">
    <property type="entry name" value="Cyt_c_Oxase_su1_BS"/>
</dbReference>
<dbReference type="InterPro" id="IPR014241">
    <property type="entry name" value="Cyt_c_oxidase_su1_bac"/>
</dbReference>
<dbReference type="NCBIfam" id="TIGR02891">
    <property type="entry name" value="CtaD_CoxA"/>
    <property type="match status" value="1"/>
</dbReference>
<dbReference type="PANTHER" id="PTHR10422">
    <property type="entry name" value="CYTOCHROME C OXIDASE SUBUNIT 1"/>
    <property type="match status" value="1"/>
</dbReference>
<dbReference type="PANTHER" id="PTHR10422:SF18">
    <property type="entry name" value="CYTOCHROME C OXIDASE SUBUNIT 1"/>
    <property type="match status" value="1"/>
</dbReference>
<dbReference type="Pfam" id="PF00115">
    <property type="entry name" value="COX1"/>
    <property type="match status" value="1"/>
</dbReference>
<dbReference type="PRINTS" id="PR01165">
    <property type="entry name" value="CYCOXIDASEI"/>
</dbReference>
<dbReference type="SUPFAM" id="SSF81442">
    <property type="entry name" value="Cytochrome c oxidase subunit I-like"/>
    <property type="match status" value="1"/>
</dbReference>
<dbReference type="PROSITE" id="PS50855">
    <property type="entry name" value="COX1"/>
    <property type="match status" value="1"/>
</dbReference>
<dbReference type="PROSITE" id="PS00077">
    <property type="entry name" value="COX1_CUB"/>
    <property type="match status" value="1"/>
</dbReference>
<comment type="function">
    <text evidence="1">Cytochrome c oxidase is the component of the respiratory chain that catalyzes the reduction of oxygen to water. Subunits 1-3 form the functional core of the enzyme complex. CO I is the catalytic subunit of the enzyme. Electrons originating in cytochrome c are transferred via the copper A center of subunit 2 and heme A of subunit 1 to the bimetallic center formed by heme A3 and copper B (By similarity).</text>
</comment>
<comment type="catalytic activity">
    <reaction>
        <text>4 Fe(II)-[cytochrome c] + O2 + 8 H(+)(in) = 4 Fe(III)-[cytochrome c] + 2 H2O + 4 H(+)(out)</text>
        <dbReference type="Rhea" id="RHEA:11436"/>
        <dbReference type="Rhea" id="RHEA-COMP:10350"/>
        <dbReference type="Rhea" id="RHEA-COMP:14399"/>
        <dbReference type="ChEBI" id="CHEBI:15377"/>
        <dbReference type="ChEBI" id="CHEBI:15378"/>
        <dbReference type="ChEBI" id="CHEBI:15379"/>
        <dbReference type="ChEBI" id="CHEBI:29033"/>
        <dbReference type="ChEBI" id="CHEBI:29034"/>
        <dbReference type="EC" id="7.1.1.9"/>
    </reaction>
</comment>
<comment type="cofactor">
    <cofactor evidence="1">
        <name>Cu(2+)</name>
        <dbReference type="ChEBI" id="CHEBI:29036"/>
    </cofactor>
    <text evidence="1">Binds 1 copper B ion per subunit.</text>
</comment>
<comment type="cofactor">
    <cofactor evidence="1">
        <name>heme</name>
        <dbReference type="ChEBI" id="CHEBI:30413"/>
    </cofactor>
    <text evidence="1">Binds 2 heme groups per subunit.</text>
</comment>
<comment type="pathway">
    <text>Energy metabolism; oxidative phosphorylation.</text>
</comment>
<comment type="subunit">
    <text evidence="1">Associates with subunits II, III and IV to form cytochrome c oxidase.</text>
</comment>
<comment type="subcellular location">
    <subcellularLocation>
        <location evidence="1">Cell membrane</location>
        <topology evidence="1">Multi-pass membrane protein</topology>
    </subcellularLocation>
</comment>
<comment type="similarity">
    <text evidence="3">Belongs to the heme-copper respiratory oxidase family.</text>
</comment>
<reference key="1">
    <citation type="journal article" date="2002" name="Nature">
        <title>Complete genome sequence of the model actinomycete Streptomyces coelicolor A3(2).</title>
        <authorList>
            <person name="Bentley S.D."/>
            <person name="Chater K.F."/>
            <person name="Cerdeno-Tarraga A.-M."/>
            <person name="Challis G.L."/>
            <person name="Thomson N.R."/>
            <person name="James K.D."/>
            <person name="Harris D.E."/>
            <person name="Quail M.A."/>
            <person name="Kieser H."/>
            <person name="Harper D."/>
            <person name="Bateman A."/>
            <person name="Brown S."/>
            <person name="Chandra G."/>
            <person name="Chen C.W."/>
            <person name="Collins M."/>
            <person name="Cronin A."/>
            <person name="Fraser A."/>
            <person name="Goble A."/>
            <person name="Hidalgo J."/>
            <person name="Hornsby T."/>
            <person name="Howarth S."/>
            <person name="Huang C.-H."/>
            <person name="Kieser T."/>
            <person name="Larke L."/>
            <person name="Murphy L.D."/>
            <person name="Oliver K."/>
            <person name="O'Neil S."/>
            <person name="Rabbinowitsch E."/>
            <person name="Rajandream M.A."/>
            <person name="Rutherford K.M."/>
            <person name="Rutter S."/>
            <person name="Seeger K."/>
            <person name="Saunders D."/>
            <person name="Sharp S."/>
            <person name="Squares R."/>
            <person name="Squares S."/>
            <person name="Taylor K."/>
            <person name="Warren T."/>
            <person name="Wietzorrek A."/>
            <person name="Woodward J.R."/>
            <person name="Barrell B.G."/>
            <person name="Parkhill J."/>
            <person name="Hopwood D.A."/>
        </authorList>
    </citation>
    <scope>NUCLEOTIDE SEQUENCE [LARGE SCALE GENOMIC DNA]</scope>
    <source>
        <strain>ATCC BAA-471 / A3(2) / M145</strain>
    </source>
</reference>
<organism>
    <name type="scientific">Streptomyces coelicolor (strain ATCC BAA-471 / A3(2) / M145)</name>
    <dbReference type="NCBI Taxonomy" id="100226"/>
    <lineage>
        <taxon>Bacteria</taxon>
        <taxon>Bacillati</taxon>
        <taxon>Actinomycetota</taxon>
        <taxon>Actinomycetes</taxon>
        <taxon>Kitasatosporales</taxon>
        <taxon>Streptomycetaceae</taxon>
        <taxon>Streptomyces</taxon>
        <taxon>Streptomyces albidoflavus group</taxon>
    </lineage>
</organism>
<feature type="chain" id="PRO_0000183453" description="Putative cytochrome c oxidase subunit 1-beta">
    <location>
        <begin position="1"/>
        <end position="573"/>
    </location>
</feature>
<feature type="transmembrane region" description="Helical" evidence="2">
    <location>
        <begin position="53"/>
        <end position="73"/>
    </location>
</feature>
<feature type="transmembrane region" description="Helical" evidence="2">
    <location>
        <begin position="103"/>
        <end position="123"/>
    </location>
</feature>
<feature type="transmembrane region" description="Helical" evidence="2">
    <location>
        <begin position="141"/>
        <end position="161"/>
    </location>
</feature>
<feature type="transmembrane region" description="Helical" evidence="2">
    <location>
        <begin position="188"/>
        <end position="208"/>
    </location>
</feature>
<feature type="transmembrane region" description="Helical" evidence="2">
    <location>
        <begin position="227"/>
        <end position="247"/>
    </location>
</feature>
<feature type="transmembrane region" description="Helical" evidence="2">
    <location>
        <begin position="272"/>
        <end position="292"/>
    </location>
</feature>
<feature type="transmembrane region" description="Helical" evidence="2">
    <location>
        <begin position="304"/>
        <end position="324"/>
    </location>
</feature>
<feature type="transmembrane region" description="Helical" evidence="2">
    <location>
        <begin position="329"/>
        <end position="349"/>
    </location>
</feature>
<feature type="transmembrane region" description="Helical" evidence="2">
    <location>
        <begin position="373"/>
        <end position="393"/>
    </location>
</feature>
<feature type="transmembrane region" description="Helical" evidence="2">
    <location>
        <begin position="412"/>
        <end position="432"/>
    </location>
</feature>
<feature type="transmembrane region" description="Helical" evidence="2">
    <location>
        <begin position="447"/>
        <end position="467"/>
    </location>
</feature>
<feature type="transmembrane region" description="Helical" evidence="2">
    <location>
        <begin position="490"/>
        <end position="510"/>
    </location>
</feature>
<feature type="binding site" description="axial binding residue" evidence="1">
    <location>
        <position position="100"/>
    </location>
    <ligand>
        <name>Fe(II)-heme a</name>
        <dbReference type="ChEBI" id="CHEBI:61715"/>
    </ligand>
    <ligandPart>
        <name>Fe</name>
        <dbReference type="ChEBI" id="CHEBI:18248"/>
    </ligandPart>
</feature>
<feature type="binding site" evidence="1">
    <location>
        <position position="278"/>
    </location>
    <ligand>
        <name>Cu cation</name>
        <dbReference type="ChEBI" id="CHEBI:23378"/>
        <label>B</label>
    </ligand>
</feature>
<feature type="binding site" evidence="1">
    <location>
        <position position="282"/>
    </location>
    <ligand>
        <name>Cu cation</name>
        <dbReference type="ChEBI" id="CHEBI:23378"/>
        <label>B</label>
    </ligand>
</feature>
<feature type="binding site" evidence="1">
    <location>
        <position position="327"/>
    </location>
    <ligand>
        <name>Cu cation</name>
        <dbReference type="ChEBI" id="CHEBI:23378"/>
        <label>B</label>
    </ligand>
</feature>
<feature type="binding site" evidence="1">
    <location>
        <position position="328"/>
    </location>
    <ligand>
        <name>Cu cation</name>
        <dbReference type="ChEBI" id="CHEBI:23378"/>
        <label>B</label>
    </ligand>
</feature>
<feature type="binding site" description="axial binding residue" evidence="1">
    <location>
        <position position="411"/>
    </location>
    <ligand>
        <name>heme a3</name>
        <dbReference type="ChEBI" id="CHEBI:83282"/>
    </ligand>
    <ligandPart>
        <name>Fe</name>
        <dbReference type="ChEBI" id="CHEBI:18248"/>
    </ligandPart>
</feature>
<feature type="binding site" description="axial binding residue" evidence="1">
    <location>
        <position position="413"/>
    </location>
    <ligand>
        <name>Fe(II)-heme a</name>
        <dbReference type="ChEBI" id="CHEBI:61715"/>
    </ligand>
    <ligandPart>
        <name>Fe</name>
        <dbReference type="ChEBI" id="CHEBI:18248"/>
    </ligandPart>
</feature>
<feature type="cross-link" description="1'-histidyl-3'-tyrosine (His-Tyr)" evidence="1">
    <location>
        <begin position="278"/>
        <end position="282"/>
    </location>
</feature>